<protein>
    <recommendedName>
        <fullName evidence="1">NADPH--cytochrome P450 reductase</fullName>
        <shortName evidence="1">CPR</shortName>
        <shortName evidence="1">P450R</shortName>
        <ecNumber evidence="1">1.6.2.4</ecNumber>
    </recommendedName>
</protein>
<comment type="function">
    <text evidence="1">This enzyme is required for electron transfer from NADP to cytochrome P450 in microsomes. It can also provide electron transfer to heme oxygenase and cytochrome B5. Involved in ergosterol biosynthesis.</text>
</comment>
<comment type="catalytic activity">
    <reaction evidence="1">
        <text>2 oxidized [cytochrome P450] + NADPH = 2 reduced [cytochrome P450] + NADP(+) + H(+)</text>
        <dbReference type="Rhea" id="RHEA:24040"/>
        <dbReference type="Rhea" id="RHEA-COMP:14627"/>
        <dbReference type="Rhea" id="RHEA-COMP:14628"/>
        <dbReference type="ChEBI" id="CHEBI:15378"/>
        <dbReference type="ChEBI" id="CHEBI:55376"/>
        <dbReference type="ChEBI" id="CHEBI:57783"/>
        <dbReference type="ChEBI" id="CHEBI:58349"/>
        <dbReference type="ChEBI" id="CHEBI:60344"/>
        <dbReference type="EC" id="1.6.2.4"/>
    </reaction>
</comment>
<comment type="cofactor">
    <cofactor evidence="1">
        <name>FAD</name>
        <dbReference type="ChEBI" id="CHEBI:57692"/>
    </cofactor>
    <text evidence="1">Binds 1 FAD per monomer.</text>
</comment>
<comment type="cofactor">
    <cofactor evidence="1">
        <name>FMN</name>
        <dbReference type="ChEBI" id="CHEBI:58210"/>
    </cofactor>
    <text evidence="1">Binds 1 FMN per monomer.</text>
</comment>
<comment type="subcellular location">
    <subcellularLocation>
        <location evidence="1">Endoplasmic reticulum membrane</location>
        <topology evidence="1">Single-pass membrane protein</topology>
        <orientation evidence="1">Cytoplasmic side</orientation>
    </subcellularLocation>
    <subcellularLocation>
        <location evidence="1">Mitochondrion outer membrane</location>
        <topology evidence="1">Single-pass membrane protein</topology>
        <orientation evidence="1">Cytoplasmic side</orientation>
    </subcellularLocation>
    <subcellularLocation>
        <location evidence="1">Cell membrane</location>
        <topology evidence="1">Single-pass membrane protein</topology>
        <orientation evidence="1">Cytoplasmic side</orientation>
    </subcellularLocation>
</comment>
<comment type="similarity">
    <text evidence="1">Belongs to the NADPH--cytochrome P450 reductase family.</text>
</comment>
<comment type="similarity">
    <text evidence="1">In the N-terminal section; belongs to the flavodoxin family.</text>
</comment>
<comment type="similarity">
    <text evidence="1">In the C-terminal section; belongs to the flavoprotein pyridine nucleotide cytochrome reductase family.</text>
</comment>
<gene>
    <name evidence="1" type="primary">NCP1</name>
</gene>
<keyword id="KW-1003">Cell membrane</keyword>
<keyword id="KW-0256">Endoplasmic reticulum</keyword>
<keyword id="KW-0274">FAD</keyword>
<keyword id="KW-0285">Flavoprotein</keyword>
<keyword id="KW-0288">FMN</keyword>
<keyword id="KW-0444">Lipid biosynthesis</keyword>
<keyword id="KW-0443">Lipid metabolism</keyword>
<keyword id="KW-0472">Membrane</keyword>
<keyword id="KW-0496">Mitochondrion</keyword>
<keyword id="KW-1000">Mitochondrion outer membrane</keyword>
<keyword id="KW-0521">NADP</keyword>
<keyword id="KW-0560">Oxidoreductase</keyword>
<keyword id="KW-0752">Steroid biosynthesis</keyword>
<keyword id="KW-0753">Steroid metabolism</keyword>
<keyword id="KW-0756">Sterol biosynthesis</keyword>
<keyword id="KW-1207">Sterol metabolism</keyword>
<keyword id="KW-0812">Transmembrane</keyword>
<keyword id="KW-1133">Transmembrane helix</keyword>
<proteinExistence type="evidence at transcript level"/>
<dbReference type="EC" id="1.6.2.4" evidence="1"/>
<dbReference type="EMBL" id="X76226">
    <property type="protein sequence ID" value="CAA53812.1"/>
    <property type="molecule type" value="mRNA"/>
</dbReference>
<dbReference type="EMBL" id="D25327">
    <property type="protein sequence ID" value="BAA04997.1"/>
    <property type="molecule type" value="Genomic_DNA"/>
</dbReference>
<dbReference type="PIR" id="S63698">
    <property type="entry name" value="S63698"/>
</dbReference>
<dbReference type="PIR" id="S63895">
    <property type="entry name" value="S63895"/>
</dbReference>
<dbReference type="SMR" id="P50126"/>
<dbReference type="OMA" id="QKRYQRD"/>
<dbReference type="BioCyc" id="MetaCyc:MONOMER-18776"/>
<dbReference type="GO" id="GO:0005829">
    <property type="term" value="C:cytosol"/>
    <property type="evidence" value="ECO:0007669"/>
    <property type="project" value="TreeGrafter"/>
</dbReference>
<dbReference type="GO" id="GO:0005789">
    <property type="term" value="C:endoplasmic reticulum membrane"/>
    <property type="evidence" value="ECO:0007669"/>
    <property type="project" value="UniProtKB-SubCell"/>
</dbReference>
<dbReference type="GO" id="GO:0005741">
    <property type="term" value="C:mitochondrial outer membrane"/>
    <property type="evidence" value="ECO:0007669"/>
    <property type="project" value="UniProtKB-SubCell"/>
</dbReference>
<dbReference type="GO" id="GO:0005886">
    <property type="term" value="C:plasma membrane"/>
    <property type="evidence" value="ECO:0007669"/>
    <property type="project" value="UniProtKB-SubCell"/>
</dbReference>
<dbReference type="GO" id="GO:0050660">
    <property type="term" value="F:flavin adenine dinucleotide binding"/>
    <property type="evidence" value="ECO:0007669"/>
    <property type="project" value="UniProtKB-UniRule"/>
</dbReference>
<dbReference type="GO" id="GO:0010181">
    <property type="term" value="F:FMN binding"/>
    <property type="evidence" value="ECO:0007669"/>
    <property type="project" value="UniProtKB-UniRule"/>
</dbReference>
<dbReference type="GO" id="GO:0050661">
    <property type="term" value="F:NADP binding"/>
    <property type="evidence" value="ECO:0007669"/>
    <property type="project" value="UniProtKB-UniRule"/>
</dbReference>
<dbReference type="GO" id="GO:0003958">
    <property type="term" value="F:NADPH-hemoprotein reductase activity"/>
    <property type="evidence" value="ECO:0007669"/>
    <property type="project" value="UniProtKB-UniRule"/>
</dbReference>
<dbReference type="GO" id="GO:0006696">
    <property type="term" value="P:ergosterol biosynthetic process"/>
    <property type="evidence" value="ECO:0007669"/>
    <property type="project" value="UniProtKB-UniRule"/>
</dbReference>
<dbReference type="CDD" id="cd06204">
    <property type="entry name" value="CYPOR"/>
    <property type="match status" value="1"/>
</dbReference>
<dbReference type="FunFam" id="1.20.990.10:FF:000009">
    <property type="entry name" value="NADPH--cytochrome P450 reductase"/>
    <property type="match status" value="1"/>
</dbReference>
<dbReference type="FunFam" id="2.40.30.10:FF:000100">
    <property type="entry name" value="NADPH--cytochrome P450 reductase"/>
    <property type="match status" value="1"/>
</dbReference>
<dbReference type="FunFam" id="3.40.50.360:FF:000075">
    <property type="entry name" value="NADPH--cytochrome P450 reductase"/>
    <property type="match status" value="1"/>
</dbReference>
<dbReference type="FunFam" id="3.40.50.80:FF:000018">
    <property type="entry name" value="NADPH--cytochrome P450 reductase"/>
    <property type="match status" value="1"/>
</dbReference>
<dbReference type="Gene3D" id="3.40.50.360">
    <property type="match status" value="1"/>
</dbReference>
<dbReference type="Gene3D" id="1.20.990.10">
    <property type="entry name" value="NADPH-cytochrome p450 Reductase, Chain A, domain 3"/>
    <property type="match status" value="1"/>
</dbReference>
<dbReference type="Gene3D" id="3.40.50.80">
    <property type="entry name" value="Nucleotide-binding domain of ferredoxin-NADP reductase (FNR) module"/>
    <property type="match status" value="1"/>
</dbReference>
<dbReference type="Gene3D" id="2.40.30.10">
    <property type="entry name" value="Translation factors"/>
    <property type="match status" value="1"/>
</dbReference>
<dbReference type="HAMAP" id="MF_03212">
    <property type="entry name" value="NCPR"/>
    <property type="match status" value="1"/>
</dbReference>
<dbReference type="InterPro" id="IPR003097">
    <property type="entry name" value="CysJ-like_FAD-binding"/>
</dbReference>
<dbReference type="InterPro" id="IPR017927">
    <property type="entry name" value="FAD-bd_FR_type"/>
</dbReference>
<dbReference type="InterPro" id="IPR001094">
    <property type="entry name" value="Flavdoxin-like"/>
</dbReference>
<dbReference type="InterPro" id="IPR008254">
    <property type="entry name" value="Flavodoxin/NO_synth"/>
</dbReference>
<dbReference type="InterPro" id="IPR001709">
    <property type="entry name" value="Flavoprot_Pyr_Nucl_cyt_Rdtase"/>
</dbReference>
<dbReference type="InterPro" id="IPR029039">
    <property type="entry name" value="Flavoprotein-like_sf"/>
</dbReference>
<dbReference type="InterPro" id="IPR039261">
    <property type="entry name" value="FNR_nucleotide-bd"/>
</dbReference>
<dbReference type="InterPro" id="IPR023173">
    <property type="entry name" value="NADPH_Cyt_P450_Rdtase_alpha"/>
</dbReference>
<dbReference type="InterPro" id="IPR001433">
    <property type="entry name" value="OxRdtase_FAD/NAD-bd"/>
</dbReference>
<dbReference type="InterPro" id="IPR023208">
    <property type="entry name" value="P450R"/>
</dbReference>
<dbReference type="InterPro" id="IPR017938">
    <property type="entry name" value="Riboflavin_synthase-like_b-brl"/>
</dbReference>
<dbReference type="PANTHER" id="PTHR19384:SF17">
    <property type="entry name" value="NADPH--CYTOCHROME P450 REDUCTASE"/>
    <property type="match status" value="1"/>
</dbReference>
<dbReference type="PANTHER" id="PTHR19384">
    <property type="entry name" value="NITRIC OXIDE SYNTHASE-RELATED"/>
    <property type="match status" value="1"/>
</dbReference>
<dbReference type="Pfam" id="PF00667">
    <property type="entry name" value="FAD_binding_1"/>
    <property type="match status" value="1"/>
</dbReference>
<dbReference type="Pfam" id="PF00258">
    <property type="entry name" value="Flavodoxin_1"/>
    <property type="match status" value="1"/>
</dbReference>
<dbReference type="Pfam" id="PF00175">
    <property type="entry name" value="NAD_binding_1"/>
    <property type="match status" value="1"/>
</dbReference>
<dbReference type="PIRSF" id="PIRSF000208">
    <property type="entry name" value="P450R"/>
    <property type="match status" value="1"/>
</dbReference>
<dbReference type="PRINTS" id="PR00369">
    <property type="entry name" value="FLAVODOXIN"/>
</dbReference>
<dbReference type="PRINTS" id="PR00371">
    <property type="entry name" value="FPNCR"/>
</dbReference>
<dbReference type="SUPFAM" id="SSF52343">
    <property type="entry name" value="Ferredoxin reductase-like, C-terminal NADP-linked domain"/>
    <property type="match status" value="1"/>
</dbReference>
<dbReference type="SUPFAM" id="SSF52218">
    <property type="entry name" value="Flavoproteins"/>
    <property type="match status" value="1"/>
</dbReference>
<dbReference type="SUPFAM" id="SSF63380">
    <property type="entry name" value="Riboflavin synthase domain-like"/>
    <property type="match status" value="1"/>
</dbReference>
<dbReference type="PROSITE" id="PS51384">
    <property type="entry name" value="FAD_FR"/>
    <property type="match status" value="1"/>
</dbReference>
<dbReference type="PROSITE" id="PS50902">
    <property type="entry name" value="FLAVODOXIN_LIKE"/>
    <property type="match status" value="1"/>
</dbReference>
<feature type="chain" id="PRO_0000167605" description="NADPH--cytochrome P450 reductase">
    <location>
        <begin position="1"/>
        <end position="680"/>
    </location>
</feature>
<feature type="topological domain" description="Lumenal" evidence="1">
    <location>
        <begin position="1"/>
        <end position="5"/>
    </location>
</feature>
<feature type="transmembrane region" description="Helical" evidence="1">
    <location>
        <begin position="6"/>
        <end position="23"/>
    </location>
</feature>
<feature type="topological domain" description="Cytoplasmic" evidence="1">
    <location>
        <begin position="24"/>
        <end position="680"/>
    </location>
</feature>
<feature type="domain" description="Flavodoxin-like" evidence="1">
    <location>
        <begin position="60"/>
        <end position="204"/>
    </location>
</feature>
<feature type="domain" description="FAD-binding FR-type" evidence="1">
    <location>
        <begin position="264"/>
        <end position="509"/>
    </location>
</feature>
<feature type="binding site" evidence="1">
    <location>
        <begin position="66"/>
        <end position="71"/>
    </location>
    <ligand>
        <name>FMN</name>
        <dbReference type="ChEBI" id="CHEBI:58210"/>
    </ligand>
</feature>
<feature type="binding site" evidence="1">
    <location>
        <begin position="117"/>
        <end position="120"/>
    </location>
    <ligand>
        <name>FMN</name>
        <dbReference type="ChEBI" id="CHEBI:58210"/>
    </ligand>
</feature>
<feature type="binding site" evidence="1">
    <location>
        <begin position="152"/>
        <end position="161"/>
    </location>
    <ligand>
        <name>FMN</name>
        <dbReference type="ChEBI" id="CHEBI:58210"/>
    </ligand>
</feature>
<feature type="binding site" evidence="1">
    <location>
        <position position="187"/>
    </location>
    <ligand>
        <name>FMN</name>
        <dbReference type="ChEBI" id="CHEBI:58210"/>
    </ligand>
</feature>
<feature type="binding site" evidence="1">
    <location>
        <position position="283"/>
    </location>
    <ligand>
        <name>NADP(+)</name>
        <dbReference type="ChEBI" id="CHEBI:58349"/>
    </ligand>
</feature>
<feature type="binding site" evidence="1">
    <location>
        <begin position="439"/>
        <end position="442"/>
    </location>
    <ligand>
        <name>FAD</name>
        <dbReference type="ChEBI" id="CHEBI:57692"/>
    </ligand>
</feature>
<feature type="binding site" evidence="1">
    <location>
        <begin position="457"/>
        <end position="459"/>
    </location>
    <ligand>
        <name>FAD</name>
        <dbReference type="ChEBI" id="CHEBI:57692"/>
    </ligand>
</feature>
<feature type="binding site" evidence="1">
    <location>
        <begin position="473"/>
        <end position="476"/>
    </location>
    <ligand>
        <name>FAD</name>
        <dbReference type="ChEBI" id="CHEBI:57692"/>
    </ligand>
</feature>
<feature type="binding site" evidence="1">
    <location>
        <position position="537"/>
    </location>
    <ligand>
        <name>NADP(+)</name>
        <dbReference type="ChEBI" id="CHEBI:58349"/>
    </ligand>
</feature>
<feature type="binding site" evidence="1">
    <location>
        <begin position="599"/>
        <end position="600"/>
    </location>
    <ligand>
        <name>NADP(+)</name>
        <dbReference type="ChEBI" id="CHEBI:58349"/>
    </ligand>
</feature>
<feature type="binding site" evidence="1">
    <location>
        <begin position="606"/>
        <end position="610"/>
    </location>
    <ligand>
        <name>NADP(+)</name>
        <dbReference type="ChEBI" id="CHEBI:58349"/>
    </ligand>
</feature>
<feature type="binding site" evidence="1">
    <location>
        <position position="642"/>
    </location>
    <ligand>
        <name>NADP(+)</name>
        <dbReference type="ChEBI" id="CHEBI:58349"/>
    </ligand>
</feature>
<feature type="binding site" evidence="1">
    <location>
        <position position="680"/>
    </location>
    <ligand>
        <name>FAD</name>
        <dbReference type="ChEBI" id="CHEBI:57692"/>
    </ligand>
</feature>
<feature type="sequence conflict" description="In Ref. 2; BAA04997." evidence="2" ref="2">
    <original>Q</original>
    <variation>E</variation>
    <location>
        <position position="30"/>
    </location>
</feature>
<feature type="sequence conflict" description="In Ref. 2; BAA04997." evidence="2" ref="2">
    <original>LL</original>
    <variation>VF</variation>
    <location>
        <begin position="170"/>
        <end position="171"/>
    </location>
</feature>
<feature type="sequence conflict" description="In Ref. 2; BAA04997." evidence="2" ref="2">
    <original>F</original>
    <variation>P</variation>
    <location>
        <position position="565"/>
    </location>
</feature>
<feature type="sequence conflict" description="In Ref. 2; BAA04997." evidence="2" ref="2">
    <original>Q</original>
    <variation>K</variation>
    <location>
        <position position="579"/>
    </location>
</feature>
<feature type="sequence conflict" description="In Ref. 2; BAA04997." evidence="2" ref="2">
    <original>V</original>
    <variation>L</variation>
    <location>
        <position position="619"/>
    </location>
</feature>
<feature type="sequence conflict" description="In Ref. 2; BAA04997." evidence="2" ref="2">
    <original>E</original>
    <variation>D</variation>
    <location>
        <position position="664"/>
    </location>
</feature>
<evidence type="ECO:0000255" key="1">
    <source>
        <dbReference type="HAMAP-Rule" id="MF_03212"/>
    </source>
</evidence>
<evidence type="ECO:0000305" key="2"/>
<reference key="1">
    <citation type="journal article" date="1996" name="Yeast">
        <title>Candida maltosa NADPH-cytochrome P450 reductase: cloning of a full-length cDNA, heterologous expression in Saccharomyces cerevisiae and function of the N-terminal region for membrane anchoring and proliferation of the endoplasmic reticulum.</title>
        <authorList>
            <person name="Kaergel E."/>
            <person name="Honeck H."/>
            <person name="Vogel F."/>
            <person name="Boehmer A."/>
            <person name="Schunk W.-H."/>
        </authorList>
    </citation>
    <scope>NUCLEOTIDE SEQUENCE [MRNA]</scope>
    <source>
        <strain>EH15</strain>
    </source>
</reference>
<reference key="2">
    <citation type="journal article" date="1995" name="Biosci. Biotechnol. Biochem.">
        <title>Evidence that the expression of the gene for NADPH-cytochrome P-450 reductase is n-alkane-inducible in Candida maltosa.</title>
        <authorList>
            <person name="Ohkuma M."/>
            <person name="Masuda Y."/>
            <person name="Park S.M."/>
            <person name="Ohtomo R."/>
            <person name="Ohta A."/>
            <person name="Takagi M."/>
        </authorList>
    </citation>
    <scope>NUCLEOTIDE SEQUENCE [GENOMIC DNA]</scope>
    <source>
        <strain>ATCC 28140 / CBS 5611 / IAM 12247 / JCM 1504 / NBRC 1977</strain>
    </source>
</reference>
<name>NCPR_CANMA</name>
<organism>
    <name type="scientific">Candida maltosa</name>
    <name type="common">Yeast</name>
    <dbReference type="NCBI Taxonomy" id="5479"/>
    <lineage>
        <taxon>Eukaryota</taxon>
        <taxon>Fungi</taxon>
        <taxon>Dikarya</taxon>
        <taxon>Ascomycota</taxon>
        <taxon>Saccharomycotina</taxon>
        <taxon>Pichiomycetes</taxon>
        <taxon>Debaryomycetaceae</taxon>
        <taxon>Candida/Lodderomyces clade</taxon>
        <taxon>Candida</taxon>
    </lineage>
</organism>
<sequence>MALDKLDLYVIIVLAVAVAAYFAKNQFLDQPQDTGFLSNDTAGGNSRDILETLKKNNKNTLLLFGSQTGTAEDYANKLSREIHSRFGLKTMVADFADYDWDNFGDIPNDILVFFIVATYGEGEPTDNADEFHTWLTDEADTLSTLRYTVFGLGNSTYEFYNAIGRKFDRLLEEKGGERFADYGEGDDGTGTLDEDFLTWKDNVFDTLKNDLNFEERELKYEPNVKLTERDDLTVDDSEVSLGEPNKKYIQSEEIDLTKGPFDHTHPYLAKISKTRELFASKERNCVHVEFDVSESNLKYTTGDHLAVWPSNSDENIAKFIKCFGLDDKINTVFELKALDSTYQIPFPNPITYGAVVRHHLEISGPVSRQFFLAIAGFAPDEETKKTFTRIGNDKQEFANKITRKKLNVADALLFASNGRPWSDVPFEFIIENVPHLQPRYYSISSSSLSEKQTINITAVVEVEEEADGRAVTGVVTNLLKNIEIEQNKTGEKPVVHYDLSGPRNKFNKFKLPVHVRRSNFKLPKNTTTPVILIGPGTGVAPLRGFVRERVQQVKNGVNVGKTVLFYGCRNEHDDFLYKQEWSEYASVLGENFEMFTAFSRQDPSKKVYVQDKIAENSKVVNDLLNEGAIIYVCGDASRMARDVQSTIAKIVAKHREIQEDKAVELVKSWKVQNRYQEDVW</sequence>
<accession>P50126</accession>